<protein>
    <recommendedName>
        <fullName evidence="1">Thymidylate synthase</fullName>
        <shortName evidence="1">TS</shortName>
        <shortName evidence="1">TSase</shortName>
        <ecNumber evidence="1">2.1.1.45</ecNumber>
    </recommendedName>
</protein>
<sequence>MKAYLDLMRHVLDNGTDKSDRTGTGTRSVFGYQMRFDLGKGFPLLTTKKLHLRSIIHELLWFLKGDTNIKYLKDNNVSIWDEWADENGDLGPVYGYQWRSWPAPDGRHIDQIANVVEQIKKNPDSRRLIVSAWNPALVDEMALPPCHALFQFYVADGKLSCQLYQRSADIFLGVPFNIASYALLTMMMAQVCGLEAGEFVHTFGDAHLYRNHFEQAALQLEREPRALPVMKINPEVKDLFAFKFEDFELEGYDPHPHIKAVVSV</sequence>
<evidence type="ECO:0000255" key="1">
    <source>
        <dbReference type="HAMAP-Rule" id="MF_00008"/>
    </source>
</evidence>
<organism>
    <name type="scientific">Neisseria gonorrhoeae (strain ATCC 700825 / FA 1090)</name>
    <dbReference type="NCBI Taxonomy" id="242231"/>
    <lineage>
        <taxon>Bacteria</taxon>
        <taxon>Pseudomonadati</taxon>
        <taxon>Pseudomonadota</taxon>
        <taxon>Betaproteobacteria</taxon>
        <taxon>Neisseriales</taxon>
        <taxon>Neisseriaceae</taxon>
        <taxon>Neisseria</taxon>
    </lineage>
</organism>
<reference key="1">
    <citation type="submission" date="2003-03" db="EMBL/GenBank/DDBJ databases">
        <title>The complete genome sequence of Neisseria gonorrhoeae.</title>
        <authorList>
            <person name="Lewis L.A."/>
            <person name="Gillaspy A.F."/>
            <person name="McLaughlin R.E."/>
            <person name="Gipson M."/>
            <person name="Ducey T.F."/>
            <person name="Ownbey T."/>
            <person name="Hartman K."/>
            <person name="Nydick C."/>
            <person name="Carson M.B."/>
            <person name="Vaughn J."/>
            <person name="Thomson C."/>
            <person name="Song L."/>
            <person name="Lin S."/>
            <person name="Yuan X."/>
            <person name="Najar F."/>
            <person name="Zhan M."/>
            <person name="Ren Q."/>
            <person name="Zhu H."/>
            <person name="Qi S."/>
            <person name="Kenton S.M."/>
            <person name="Lai H."/>
            <person name="White J.D."/>
            <person name="Clifton S."/>
            <person name="Roe B.A."/>
            <person name="Dyer D.W."/>
        </authorList>
    </citation>
    <scope>NUCLEOTIDE SEQUENCE [LARGE SCALE GENOMIC DNA]</scope>
    <source>
        <strain>ATCC 700825 / FA 1090</strain>
    </source>
</reference>
<accession>Q5F732</accession>
<feature type="chain" id="PRO_1000000637" description="Thymidylate synthase">
    <location>
        <begin position="1"/>
        <end position="264"/>
    </location>
</feature>
<feature type="active site" description="Nucleophile" evidence="1">
    <location>
        <position position="146"/>
    </location>
</feature>
<feature type="binding site" description="in other chain" evidence="1">
    <location>
        <position position="21"/>
    </location>
    <ligand>
        <name>dUMP</name>
        <dbReference type="ChEBI" id="CHEBI:246422"/>
        <note>ligand shared between dimeric partners</note>
    </ligand>
</feature>
<feature type="binding site" evidence="1">
    <location>
        <position position="51"/>
    </location>
    <ligand>
        <name>(6R)-5,10-methylene-5,6,7,8-tetrahydrofolate</name>
        <dbReference type="ChEBI" id="CHEBI:15636"/>
    </ligand>
</feature>
<feature type="binding site" evidence="1">
    <location>
        <begin position="126"/>
        <end position="127"/>
    </location>
    <ligand>
        <name>dUMP</name>
        <dbReference type="ChEBI" id="CHEBI:246422"/>
        <note>ligand shared between dimeric partners</note>
    </ligand>
</feature>
<feature type="binding site" description="in other chain" evidence="1">
    <location>
        <begin position="166"/>
        <end position="169"/>
    </location>
    <ligand>
        <name>dUMP</name>
        <dbReference type="ChEBI" id="CHEBI:246422"/>
        <note>ligand shared between dimeric partners</note>
    </ligand>
</feature>
<feature type="binding site" evidence="1">
    <location>
        <position position="169"/>
    </location>
    <ligand>
        <name>(6R)-5,10-methylene-5,6,7,8-tetrahydrofolate</name>
        <dbReference type="ChEBI" id="CHEBI:15636"/>
    </ligand>
</feature>
<feature type="binding site" description="in other chain" evidence="1">
    <location>
        <position position="177"/>
    </location>
    <ligand>
        <name>dUMP</name>
        <dbReference type="ChEBI" id="CHEBI:246422"/>
        <note>ligand shared between dimeric partners</note>
    </ligand>
</feature>
<feature type="binding site" description="in other chain" evidence="1">
    <location>
        <begin position="207"/>
        <end position="209"/>
    </location>
    <ligand>
        <name>dUMP</name>
        <dbReference type="ChEBI" id="CHEBI:246422"/>
        <note>ligand shared between dimeric partners</note>
    </ligand>
</feature>
<feature type="binding site" evidence="1">
    <location>
        <position position="263"/>
    </location>
    <ligand>
        <name>(6R)-5,10-methylene-5,6,7,8-tetrahydrofolate</name>
        <dbReference type="ChEBI" id="CHEBI:15636"/>
    </ligand>
</feature>
<comment type="function">
    <text evidence="1">Catalyzes the reductive methylation of 2'-deoxyuridine-5'-monophosphate (dUMP) to 2'-deoxythymidine-5'-monophosphate (dTMP) while utilizing 5,10-methylenetetrahydrofolate (mTHF) as the methyl donor and reductant in the reaction, yielding dihydrofolate (DHF) as a by-product. This enzymatic reaction provides an intracellular de novo source of dTMP, an essential precursor for DNA biosynthesis.</text>
</comment>
<comment type="catalytic activity">
    <reaction evidence="1">
        <text>dUMP + (6R)-5,10-methylene-5,6,7,8-tetrahydrofolate = 7,8-dihydrofolate + dTMP</text>
        <dbReference type="Rhea" id="RHEA:12104"/>
        <dbReference type="ChEBI" id="CHEBI:15636"/>
        <dbReference type="ChEBI" id="CHEBI:57451"/>
        <dbReference type="ChEBI" id="CHEBI:63528"/>
        <dbReference type="ChEBI" id="CHEBI:246422"/>
        <dbReference type="EC" id="2.1.1.45"/>
    </reaction>
</comment>
<comment type="pathway">
    <text evidence="1">Pyrimidine metabolism; dTTP biosynthesis.</text>
</comment>
<comment type="subunit">
    <text evidence="1">Homodimer.</text>
</comment>
<comment type="subcellular location">
    <subcellularLocation>
        <location evidence="1">Cytoplasm</location>
    </subcellularLocation>
</comment>
<comment type="similarity">
    <text evidence="1">Belongs to the thymidylate synthase family. Bacterial-type ThyA subfamily.</text>
</comment>
<keyword id="KW-0963">Cytoplasm</keyword>
<keyword id="KW-0489">Methyltransferase</keyword>
<keyword id="KW-0545">Nucleotide biosynthesis</keyword>
<keyword id="KW-1185">Reference proteome</keyword>
<keyword id="KW-0808">Transferase</keyword>
<gene>
    <name evidence="1" type="primary">thyA</name>
    <name type="ordered locus">NGO_1357</name>
</gene>
<dbReference type="EC" id="2.1.1.45" evidence="1"/>
<dbReference type="EMBL" id="AE004969">
    <property type="protein sequence ID" value="AAW90005.1"/>
    <property type="molecule type" value="Genomic_DNA"/>
</dbReference>
<dbReference type="RefSeq" id="WP_003691712.1">
    <property type="nucleotide sequence ID" value="NC_002946.2"/>
</dbReference>
<dbReference type="RefSeq" id="YP_208417.1">
    <property type="nucleotide sequence ID" value="NC_002946.2"/>
</dbReference>
<dbReference type="SMR" id="Q5F732"/>
<dbReference type="STRING" id="242231.NGO_1357"/>
<dbReference type="KEGG" id="ngo:NGO_1357"/>
<dbReference type="PATRIC" id="fig|242231.10.peg.1598"/>
<dbReference type="HOGENOM" id="CLU_021669_0_0_4"/>
<dbReference type="UniPathway" id="UPA00575"/>
<dbReference type="Proteomes" id="UP000000535">
    <property type="component" value="Chromosome"/>
</dbReference>
<dbReference type="GO" id="GO:0005829">
    <property type="term" value="C:cytosol"/>
    <property type="evidence" value="ECO:0007669"/>
    <property type="project" value="TreeGrafter"/>
</dbReference>
<dbReference type="GO" id="GO:0004799">
    <property type="term" value="F:thymidylate synthase activity"/>
    <property type="evidence" value="ECO:0007669"/>
    <property type="project" value="UniProtKB-UniRule"/>
</dbReference>
<dbReference type="GO" id="GO:0006231">
    <property type="term" value="P:dTMP biosynthetic process"/>
    <property type="evidence" value="ECO:0007669"/>
    <property type="project" value="UniProtKB-UniRule"/>
</dbReference>
<dbReference type="GO" id="GO:0006235">
    <property type="term" value="P:dTTP biosynthetic process"/>
    <property type="evidence" value="ECO:0007669"/>
    <property type="project" value="UniProtKB-UniRule"/>
</dbReference>
<dbReference type="GO" id="GO:0032259">
    <property type="term" value="P:methylation"/>
    <property type="evidence" value="ECO:0007669"/>
    <property type="project" value="UniProtKB-KW"/>
</dbReference>
<dbReference type="CDD" id="cd00351">
    <property type="entry name" value="TS_Pyrimidine_HMase"/>
    <property type="match status" value="1"/>
</dbReference>
<dbReference type="FunFam" id="3.30.572.10:FF:000001">
    <property type="entry name" value="Thymidylate synthase"/>
    <property type="match status" value="1"/>
</dbReference>
<dbReference type="Gene3D" id="3.30.572.10">
    <property type="entry name" value="Thymidylate synthase/dCMP hydroxymethylase domain"/>
    <property type="match status" value="1"/>
</dbReference>
<dbReference type="HAMAP" id="MF_00008">
    <property type="entry name" value="Thymidy_synth_bact"/>
    <property type="match status" value="1"/>
</dbReference>
<dbReference type="InterPro" id="IPR045097">
    <property type="entry name" value="Thymidate_synth/dCMP_Mease"/>
</dbReference>
<dbReference type="InterPro" id="IPR023451">
    <property type="entry name" value="Thymidate_synth/dCMP_Mease_dom"/>
</dbReference>
<dbReference type="InterPro" id="IPR036926">
    <property type="entry name" value="Thymidate_synth/dCMP_Mease_sf"/>
</dbReference>
<dbReference type="InterPro" id="IPR000398">
    <property type="entry name" value="Thymidylate_synthase"/>
</dbReference>
<dbReference type="InterPro" id="IPR020940">
    <property type="entry name" value="Thymidylate_synthase_AS"/>
</dbReference>
<dbReference type="NCBIfam" id="NF002497">
    <property type="entry name" value="PRK01827.1-3"/>
    <property type="match status" value="1"/>
</dbReference>
<dbReference type="NCBIfam" id="NF002499">
    <property type="entry name" value="PRK01827.1-5"/>
    <property type="match status" value="1"/>
</dbReference>
<dbReference type="NCBIfam" id="TIGR03284">
    <property type="entry name" value="thym_sym"/>
    <property type="match status" value="2"/>
</dbReference>
<dbReference type="PANTHER" id="PTHR11548:SF9">
    <property type="entry name" value="THYMIDYLATE SYNTHASE"/>
    <property type="match status" value="1"/>
</dbReference>
<dbReference type="PANTHER" id="PTHR11548">
    <property type="entry name" value="THYMIDYLATE SYNTHASE 1"/>
    <property type="match status" value="1"/>
</dbReference>
<dbReference type="Pfam" id="PF00303">
    <property type="entry name" value="Thymidylat_synt"/>
    <property type="match status" value="1"/>
</dbReference>
<dbReference type="PRINTS" id="PR00108">
    <property type="entry name" value="THYMDSNTHASE"/>
</dbReference>
<dbReference type="SUPFAM" id="SSF55831">
    <property type="entry name" value="Thymidylate synthase/dCMP hydroxymethylase"/>
    <property type="match status" value="1"/>
</dbReference>
<dbReference type="PROSITE" id="PS00091">
    <property type="entry name" value="THYMIDYLATE_SYNTHASE"/>
    <property type="match status" value="1"/>
</dbReference>
<name>TYSY_NEIG1</name>
<proteinExistence type="inferred from homology"/>